<dbReference type="EMBL" id="BX293980">
    <property type="protein sequence ID" value="CAE76666.1"/>
    <property type="molecule type" value="Genomic_DNA"/>
</dbReference>
<dbReference type="EMBL" id="U61140">
    <property type="protein sequence ID" value="AAC44570.1"/>
    <property type="molecule type" value="Genomic_DNA"/>
</dbReference>
<dbReference type="RefSeq" id="NP_975024.1">
    <property type="nucleotide sequence ID" value="NC_005364.2"/>
</dbReference>
<dbReference type="RefSeq" id="WP_011166224.1">
    <property type="nucleotide sequence ID" value="NC_005364.2"/>
</dbReference>
<dbReference type="STRING" id="272632.MSC_0013"/>
<dbReference type="KEGG" id="mmy:MSC_0013"/>
<dbReference type="PATRIC" id="fig|272632.4.peg.13"/>
<dbReference type="eggNOG" id="ENOG5032EJB">
    <property type="taxonomic scope" value="Bacteria"/>
</dbReference>
<dbReference type="HOGENOM" id="CLU_030565_0_0_14"/>
<dbReference type="Proteomes" id="UP000001016">
    <property type="component" value="Chromosome"/>
</dbReference>
<dbReference type="GO" id="GO:0005886">
    <property type="term" value="C:plasma membrane"/>
    <property type="evidence" value="ECO:0007669"/>
    <property type="project" value="UniProtKB-SubCell"/>
</dbReference>
<dbReference type="InterPro" id="IPR019992">
    <property type="entry name" value="Mycoides_lipoprot_LppA/p72"/>
</dbReference>
<dbReference type="NCBIfam" id="NF045959">
    <property type="entry name" value="LppA_rel_LP"/>
    <property type="match status" value="1"/>
</dbReference>
<dbReference type="NCBIfam" id="TIGR03490">
    <property type="entry name" value="Mycoplas_LppA"/>
    <property type="match status" value="1"/>
</dbReference>
<dbReference type="PROSITE" id="PS51257">
    <property type="entry name" value="PROKAR_LIPOPROTEIN"/>
    <property type="match status" value="1"/>
</dbReference>
<proteinExistence type="inferred from homology"/>
<evidence type="ECO:0000255" key="1">
    <source>
        <dbReference type="PROSITE-ProRule" id="PRU00303"/>
    </source>
</evidence>
<evidence type="ECO:0000256" key="2">
    <source>
        <dbReference type="SAM" id="MobiDB-lite"/>
    </source>
</evidence>
<evidence type="ECO:0000305" key="3"/>
<feature type="signal peptide" evidence="1">
    <location>
        <begin position="1"/>
        <end position="24"/>
    </location>
</feature>
<feature type="chain" id="PRO_0000018098" description="Uncharacterized lipoprotein lpp">
    <location>
        <begin position="25"/>
        <end position="548"/>
    </location>
</feature>
<feature type="region of interest" description="Disordered" evidence="2">
    <location>
        <begin position="26"/>
        <end position="129"/>
    </location>
</feature>
<feature type="compositionally biased region" description="Basic and acidic residues" evidence="2">
    <location>
        <begin position="34"/>
        <end position="44"/>
    </location>
</feature>
<feature type="compositionally biased region" description="Low complexity" evidence="2">
    <location>
        <begin position="58"/>
        <end position="78"/>
    </location>
</feature>
<feature type="compositionally biased region" description="Basic and acidic residues" evidence="2">
    <location>
        <begin position="83"/>
        <end position="109"/>
    </location>
</feature>
<feature type="compositionally biased region" description="Low complexity" evidence="2">
    <location>
        <begin position="110"/>
        <end position="128"/>
    </location>
</feature>
<feature type="lipid moiety-binding region" description="N-palmitoyl cysteine" evidence="3">
    <location>
        <position position="25"/>
    </location>
</feature>
<feature type="lipid moiety-binding region" description="S-diacylglycerol cysteine" evidence="3">
    <location>
        <position position="25"/>
    </location>
</feature>
<protein>
    <recommendedName>
        <fullName>Uncharacterized lipoprotein lpp</fullName>
    </recommendedName>
</protein>
<gene>
    <name type="primary">lpp</name>
    <name type="ordered locus">MSC_0013</name>
</gene>
<keyword id="KW-1003">Cell membrane</keyword>
<keyword id="KW-0449">Lipoprotein</keyword>
<keyword id="KW-0472">Membrane</keyword>
<keyword id="KW-0564">Palmitate</keyword>
<keyword id="KW-1185">Reference proteome</keyword>
<keyword id="KW-0732">Signal</keyword>
<accession>P55802</accession>
<name>LPP_MYCMS</name>
<organism>
    <name type="scientific">Mycoplasma mycoides subsp. mycoides SC (strain CCUG 32753 / NCTC 10114 / PG1)</name>
    <dbReference type="NCBI Taxonomy" id="272632"/>
    <lineage>
        <taxon>Bacteria</taxon>
        <taxon>Bacillati</taxon>
        <taxon>Mycoplasmatota</taxon>
        <taxon>Mollicutes</taxon>
        <taxon>Mycoplasmataceae</taxon>
        <taxon>Mycoplasma</taxon>
    </lineage>
</organism>
<sequence length="548" mass="62619">MKKATKLLLSILPISSISFLSVVSCSTRNSNAKQPDKKPEKPNEKGPIIPKNPDNKKPTNNNNNSNNNSNSNNNKPGSTVPNENKDPSKSEETPEKPERDPKKPDKQPQGDDPNNHQPHNNQHADQPNINKDEFADLDKLPKEISFERFDFYTSKDATTALSHLRTDGSVIKIIFSNTHRNIFGKYNINLELDGNEKEDVKKGLIDKVKVKFTNKKDKKSKIIEFTFTGFKVIQKSPDKENKNSKKNYIKKKEKIDNKLTGLYPSLVAYMIMYTQEPKNYKNLMQKDSINFEELENNNPNLFADPEINLNVVALKDLLLEYNRELGKLYKDKVIAVSYDDVNGKLGLKLLIENREENDTIASKYSETLEFDFVGFRKIDLKNPNKNVLSLLFPQNNFKDMIKNNVFKKKIEVLKSGKQKEDMVLVKEEYAKQLIFKNLLVQIIDNENNLYRSTQTLSLQNNKKDNYTSILGLAGGGTLYPFHTIINNNSIKNIYLMINKEKNKKYKVAINFEVDIPIFASTTSDLTFHATSGDTNILKLDITTNALID</sequence>
<reference key="1">
    <citation type="journal article" date="2004" name="Genome Res.">
        <title>The genome sequence of Mycoplasma mycoides subsp. mycoides SC type strain PG1T, the causative agent of contagious bovine pleuropneumonia (CBPP).</title>
        <authorList>
            <person name="Westberg J."/>
            <person name="Persson A."/>
            <person name="Holmberg A."/>
            <person name="Goesmann A."/>
            <person name="Lundeberg J."/>
            <person name="Johansson K.-E."/>
            <person name="Pettersson B."/>
            <person name="Uhlen M."/>
        </authorList>
    </citation>
    <scope>NUCLEOTIDE SEQUENCE [LARGE SCALE GENOMIC DNA]</scope>
    <source>
        <strain>CCUG 32753 / NCTC 10114 / PG1</strain>
    </source>
</reference>
<reference key="2">
    <citation type="journal article" date="1996" name="Microbiology">
        <title>Characterization of the gene for an immunodominant 72 kDa lipoprotein of Mycoplasma mycoides subsp. mycoides small colony type.</title>
        <authorList>
            <person name="Cheng X."/>
            <person name="Nicolet J."/>
            <person name="Miserez R."/>
            <person name="Kuhnert P."/>
            <person name="Krampe M."/>
            <person name="Pilloud T."/>
            <person name="Abdo E.-M."/>
            <person name="Griot C."/>
            <person name="Frey J."/>
        </authorList>
    </citation>
    <scope>NUCLEOTIDE SEQUENCE [GENOMIC DNA] OF 136-548</scope>
    <source>
        <strain>L2</strain>
    </source>
</reference>
<comment type="subcellular location">
    <subcellularLocation>
        <location evidence="3">Cell membrane</location>
        <topology evidence="3">Lipid-anchor</topology>
    </subcellularLocation>
</comment>
<comment type="similarity">
    <text evidence="3">Belongs to the mycoplasma p72 lipoprotein family.</text>
</comment>